<keyword id="KW-0233">DNA recombination</keyword>
<keyword id="KW-0238">DNA-binding</keyword>
<keyword id="KW-1185">Reference proteome</keyword>
<keyword id="KW-0814">Transposable element</keyword>
<keyword id="KW-0815">Transposition</keyword>
<reference key="1">
    <citation type="journal article" date="1994" name="Nucleic Acids Res.">
        <title>Analysis of the Escherichia coli genome. V. DNA sequence of the region from 76.0 to 81.5 minutes.</title>
        <authorList>
            <person name="Sofia H.J."/>
            <person name="Burland V."/>
            <person name="Daniels D.L."/>
            <person name="Plunkett G. III"/>
            <person name="Blattner F.R."/>
        </authorList>
    </citation>
    <scope>NUCLEOTIDE SEQUENCE [LARGE SCALE GENOMIC DNA]</scope>
    <source>
        <strain>K12 / MG1655 / ATCC 47076</strain>
    </source>
</reference>
<reference key="2">
    <citation type="journal article" date="1996" name="DNA Res.">
        <title>A 570-kb DNA sequence of the Escherichia coli K-12 genome corresponding to the 28.0-40.1 min region on the linkage map.</title>
        <authorList>
            <person name="Aiba H."/>
            <person name="Baba T."/>
            <person name="Fujita K."/>
            <person name="Hayashi K."/>
            <person name="Inada T."/>
            <person name="Isono K."/>
            <person name="Itoh T."/>
            <person name="Kasai H."/>
            <person name="Kashimoto K."/>
            <person name="Kimura S."/>
            <person name="Kitakawa M."/>
            <person name="Kitagawa M."/>
            <person name="Makino K."/>
            <person name="Miki T."/>
            <person name="Mizobuchi K."/>
            <person name="Mori H."/>
            <person name="Mori T."/>
            <person name="Motomura K."/>
            <person name="Nakade S."/>
            <person name="Nakamura Y."/>
            <person name="Nashimoto H."/>
            <person name="Nishio Y."/>
            <person name="Oshima T."/>
            <person name="Saito N."/>
            <person name="Sampei G."/>
            <person name="Seki Y."/>
            <person name="Sivasundaram S."/>
            <person name="Tagami H."/>
            <person name="Takeda J."/>
            <person name="Takemoto K."/>
            <person name="Takeuchi Y."/>
            <person name="Wada C."/>
            <person name="Yamamoto Y."/>
            <person name="Horiuchi T."/>
        </authorList>
    </citation>
    <scope>NUCLEOTIDE SEQUENCE [LARGE SCALE GENOMIC DNA]</scope>
    <source>
        <strain>K12 / W3110 / ATCC 27325 / DSM 5911</strain>
    </source>
</reference>
<reference key="3">
    <citation type="journal article" date="1996" name="DNA Res.">
        <title>A 460-kb DNA sequence of the Escherichia coli K-12 genome corresponding to the 40.1-50.0 min region on the linkage map.</title>
        <authorList>
            <person name="Itoh T."/>
            <person name="Aiba H."/>
            <person name="Baba T."/>
            <person name="Fujita K."/>
            <person name="Hayashi K."/>
            <person name="Inada T."/>
            <person name="Isono K."/>
            <person name="Kasai H."/>
            <person name="Kimura S."/>
            <person name="Kitakawa M."/>
            <person name="Kitagawa M."/>
            <person name="Makino K."/>
            <person name="Miki T."/>
            <person name="Mizobuchi K."/>
            <person name="Mori H."/>
            <person name="Mori T."/>
            <person name="Motomura K."/>
            <person name="Nakade S."/>
            <person name="Nakamura Y."/>
            <person name="Nashimoto H."/>
            <person name="Nishio Y."/>
            <person name="Oshima T."/>
            <person name="Saito N."/>
            <person name="Sampei G."/>
            <person name="Seki Y."/>
            <person name="Sivasundaram S."/>
            <person name="Tagami H."/>
            <person name="Takeda J."/>
            <person name="Takemoto K."/>
            <person name="Wada C."/>
            <person name="Yamamoto Y."/>
            <person name="Horiuchi T."/>
        </authorList>
    </citation>
    <scope>NUCLEOTIDE SEQUENCE [LARGE SCALE GENOMIC DNA]</scope>
    <source>
        <strain>K12 / W3110 / ATCC 27325 / DSM 5911</strain>
    </source>
</reference>
<reference key="4">
    <citation type="submission" date="1997-01" db="EMBL/GenBank/DDBJ databases">
        <title>Sequence of minutes 4-25 of Escherichia coli.</title>
        <authorList>
            <person name="Chung E."/>
            <person name="Allen E."/>
            <person name="Araujo R."/>
            <person name="Aparicio A.M."/>
            <person name="Davis K."/>
            <person name="Duncan M."/>
            <person name="Federspiel N."/>
            <person name="Hyman R."/>
            <person name="Kalman S."/>
            <person name="Komp C."/>
            <person name="Kurdi O."/>
            <person name="Lew H."/>
            <person name="Lin D."/>
            <person name="Namath A."/>
            <person name="Oefner P."/>
            <person name="Roberts D."/>
            <person name="Schramm S."/>
            <person name="Davis R.W."/>
        </authorList>
    </citation>
    <scope>NUCLEOTIDE SEQUENCE [LARGE SCALE GENOMIC DNA]</scope>
    <source>
        <strain>K12 / MG1655 / ATCC 47076</strain>
    </source>
</reference>
<reference key="5">
    <citation type="journal article" date="1997" name="Science">
        <title>The complete genome sequence of Escherichia coli K-12.</title>
        <authorList>
            <person name="Blattner F.R."/>
            <person name="Plunkett G. III"/>
            <person name="Bloch C.A."/>
            <person name="Perna N.T."/>
            <person name="Burland V."/>
            <person name="Riley M."/>
            <person name="Collado-Vides J."/>
            <person name="Glasner J.D."/>
            <person name="Rode C.K."/>
            <person name="Mayhew G.F."/>
            <person name="Gregor J."/>
            <person name="Davis N.W."/>
            <person name="Kirkpatrick H.A."/>
            <person name="Goeden M.A."/>
            <person name="Rose D.J."/>
            <person name="Mau B."/>
            <person name="Shao Y."/>
        </authorList>
    </citation>
    <scope>NUCLEOTIDE SEQUENCE [LARGE SCALE GENOMIC DNA]</scope>
    <source>
        <strain>K12 / MG1655 / ATCC 47076</strain>
    </source>
</reference>
<reference key="6">
    <citation type="journal article" date="2006" name="Mol. Syst. Biol.">
        <title>Highly accurate genome sequences of Escherichia coli K-12 strains MG1655 and W3110.</title>
        <authorList>
            <person name="Hayashi K."/>
            <person name="Morooka N."/>
            <person name="Yamamoto Y."/>
            <person name="Fujita K."/>
            <person name="Isono K."/>
            <person name="Choi S."/>
            <person name="Ohtsubo E."/>
            <person name="Baba T."/>
            <person name="Wanner B.L."/>
            <person name="Mori H."/>
            <person name="Horiuchi T."/>
        </authorList>
    </citation>
    <scope>NUCLEOTIDE SEQUENCE [LARGE SCALE GENOMIC DNA]</scope>
    <source>
        <strain>K12 / W3110 / ATCC 27325 / DSM 5911</strain>
    </source>
</reference>
<protein>
    <recommendedName>
        <fullName>Transposase InsH for insertion sequence element IS5LO</fullName>
    </recommendedName>
</protein>
<proteinExistence type="inferred from homology"/>
<gene>
    <name type="primary">insH9</name>
    <name type="ordered locus">b2982</name>
    <name type="ordered locus">JW2949</name>
</gene>
<dbReference type="EMBL" id="U28377">
    <property type="protein sequence ID" value="AAA69149.1"/>
    <property type="status" value="ALT_INIT"/>
    <property type="molecule type" value="Genomic_DNA"/>
</dbReference>
<dbReference type="EMBL" id="U00096">
    <property type="protein sequence ID" value="AAC76018.2"/>
    <property type="molecule type" value="Genomic_DNA"/>
</dbReference>
<dbReference type="EMBL" id="AP009048">
    <property type="protein sequence ID" value="BAE77043.1"/>
    <property type="status" value="ALT_INIT"/>
    <property type="molecule type" value="Genomic_DNA"/>
</dbReference>
<dbReference type="RefSeq" id="NP_414793.1">
    <property type="nucleotide sequence ID" value="NC_000913.3"/>
</dbReference>
<dbReference type="RefSeq" id="NP_415084.1">
    <property type="nucleotide sequence ID" value="NC_000913.3"/>
</dbReference>
<dbReference type="RefSeq" id="NP_415189.1">
    <property type="nucleotide sequence ID" value="NC_000913.3"/>
</dbReference>
<dbReference type="RefSeq" id="NP_415847.1">
    <property type="nucleotide sequence ID" value="NC_000913.3"/>
</dbReference>
<dbReference type="RefSeq" id="NP_416535.1">
    <property type="nucleotide sequence ID" value="NC_000913.3"/>
</dbReference>
<dbReference type="RefSeq" id="NP_416696.1">
    <property type="nucleotide sequence ID" value="NC_000913.3"/>
</dbReference>
<dbReference type="RefSeq" id="NP_417456.1">
    <property type="nucleotide sequence ID" value="NC_000913.3"/>
</dbReference>
<dbReference type="RefSeq" id="NP_417685.1">
    <property type="nucleotide sequence ID" value="NC_000913.3"/>
</dbReference>
<dbReference type="RefSeq" id="NP_417962.1">
    <property type="nucleotide sequence ID" value="NC_000913.3"/>
</dbReference>
<dbReference type="RefSeq" id="WP_000019403.1">
    <property type="nucleotide sequence ID" value="NZ_SSZK01000120.1"/>
</dbReference>
<dbReference type="FunCoup" id="P0CE56">
    <property type="interactions" value="11"/>
</dbReference>
<dbReference type="jPOST" id="P0CE56"/>
<dbReference type="EnsemblBacteria" id="AAC76018">
    <property type="protein sequence ID" value="AAC76018"/>
    <property type="gene ID" value="b2982"/>
</dbReference>
<dbReference type="GeneID" id="947516"/>
<dbReference type="KEGG" id="ecj:JW2949"/>
<dbReference type="KEGG" id="eco:b0259"/>
<dbReference type="KEGG" id="eco:b0552"/>
<dbReference type="KEGG" id="eco:b0656"/>
<dbReference type="KEGG" id="eco:b2030"/>
<dbReference type="KEGG" id="eco:b2192"/>
<dbReference type="KEGG" id="eco:b2982"/>
<dbReference type="KEGG" id="eco:b3218"/>
<dbReference type="KEGG" id="eco:b3505"/>
<dbReference type="KEGG" id="eco:b4711"/>
<dbReference type="KEGG" id="ecoc:C3026_01250"/>
<dbReference type="KEGG" id="ecoc:C3026_02730"/>
<dbReference type="KEGG" id="ecoc:C3026_03280"/>
<dbReference type="KEGG" id="ecoc:C3026_07795"/>
<dbReference type="KEGG" id="ecoc:C3026_10760"/>
<dbReference type="KEGG" id="ecoc:C3026_11440"/>
<dbReference type="KEGG" id="ecoc:C3026_12250"/>
<dbReference type="KEGG" id="ecoc:C3026_16315"/>
<dbReference type="KEGG" id="ecoc:C3026_17505"/>
<dbReference type="KEGG" id="ecoc:C3026_18985"/>
<dbReference type="KEGG" id="ecoc:C3026_23975"/>
<dbReference type="PATRIC" id="fig|83333.113.peg.1352"/>
<dbReference type="EchoBASE" id="EB4739"/>
<dbReference type="HOGENOM" id="CLU_049873_1_2_6"/>
<dbReference type="InParanoid" id="P0CE56"/>
<dbReference type="PhylomeDB" id="P0CE56"/>
<dbReference type="BioCyc" id="EcoCyc:MONOMER0-4239"/>
<dbReference type="PRO" id="PR:P0CE56"/>
<dbReference type="Proteomes" id="UP000000625">
    <property type="component" value="Chromosome"/>
</dbReference>
<dbReference type="GO" id="GO:0005829">
    <property type="term" value="C:cytosol"/>
    <property type="evidence" value="ECO:0000318"/>
    <property type="project" value="GO_Central"/>
</dbReference>
<dbReference type="GO" id="GO:0003677">
    <property type="term" value="F:DNA binding"/>
    <property type="evidence" value="ECO:0007669"/>
    <property type="project" value="UniProtKB-KW"/>
</dbReference>
<dbReference type="GO" id="GO:0004803">
    <property type="term" value="F:transposase activity"/>
    <property type="evidence" value="ECO:0000318"/>
    <property type="project" value="GO_Central"/>
</dbReference>
<dbReference type="GO" id="GO:0006313">
    <property type="term" value="P:DNA transposition"/>
    <property type="evidence" value="ECO:0000318"/>
    <property type="project" value="GO_Central"/>
</dbReference>
<dbReference type="InterPro" id="IPR047959">
    <property type="entry name" value="Transpos_IS5"/>
</dbReference>
<dbReference type="InterPro" id="IPR002559">
    <property type="entry name" value="Transposase_11"/>
</dbReference>
<dbReference type="InterPro" id="IPR008490">
    <property type="entry name" value="Transposase_InsH_N"/>
</dbReference>
<dbReference type="NCBIfam" id="NF033581">
    <property type="entry name" value="transpos_IS5_4"/>
    <property type="match status" value="1"/>
</dbReference>
<dbReference type="PANTHER" id="PTHR35604">
    <property type="entry name" value="TRANSPOSASE INSH FOR INSERTION SEQUENCE ELEMENT IS5A-RELATED"/>
    <property type="match status" value="1"/>
</dbReference>
<dbReference type="PANTHER" id="PTHR35604:SF2">
    <property type="entry name" value="TRANSPOSASE INSH FOR INSERTION SEQUENCE ELEMENT IS5A-RELATED"/>
    <property type="match status" value="1"/>
</dbReference>
<dbReference type="Pfam" id="PF01609">
    <property type="entry name" value="DDE_Tnp_1"/>
    <property type="match status" value="1"/>
</dbReference>
<dbReference type="Pfam" id="PF05598">
    <property type="entry name" value="DUF772"/>
    <property type="match status" value="1"/>
</dbReference>
<organism>
    <name type="scientific">Escherichia coli (strain K12)</name>
    <dbReference type="NCBI Taxonomy" id="83333"/>
    <lineage>
        <taxon>Bacteria</taxon>
        <taxon>Pseudomonadati</taxon>
        <taxon>Pseudomonadota</taxon>
        <taxon>Gammaproteobacteria</taxon>
        <taxon>Enterobacterales</taxon>
        <taxon>Enterobacteriaceae</taxon>
        <taxon>Escherichia</taxon>
    </lineage>
</organism>
<name>INSH9_ECOLI</name>
<accession>P0CE56</accession>
<accession>O07987</accession>
<accession>O07988</accession>
<accession>P03837</accession>
<accession>P76355</accession>
<accession>Q2MBK1</accession>
<accession>Q2MBM8</accession>
<comment type="function">
    <text>Involved in the transposition of the insertion sequence IS5.</text>
</comment>
<comment type="similarity">
    <text evidence="1">Belongs to the transposase 11 family.</text>
</comment>
<comment type="sequence caution" evidence="1">
    <conflict type="erroneous initiation">
        <sequence resource="EMBL-CDS" id="AAA69149"/>
    </conflict>
    <text>Extended N-terminus.</text>
</comment>
<comment type="sequence caution" evidence="1">
    <conflict type="erroneous initiation">
        <sequence resource="EMBL-CDS" id="BAE77043"/>
    </conflict>
    <text>Extended N-terminus.</text>
</comment>
<feature type="chain" id="PRO_0000392487" description="Transposase InsH for insertion sequence element IS5LO">
    <location>
        <begin position="1"/>
        <end position="326"/>
    </location>
</feature>
<sequence length="326" mass="37851">MSHQLTFADSEFSSKRRQTRKEIFLSRMEQILPWQNMVEVIEPFYPKAGNGRRPYPLETMLRIHCMQHWYNLSDGAMEDALYEIASMRLFARLSLDSALPDRTTIMNFRHLLEQHQLARQLFKTINRWLAEAGVMMTQGTLVDATIIEAPSSTKNKEQQRDPEMHQTKKGNQWHFGMKAHIGVDAKSGLTHSLVTTAANEHDLNQLGNLLHGEEQFVSADAGYQGAPQREELAEVDVDWLIAERPGKVRTLKQHPRKNKTAINIEYMKASIRARVEHPFRIIKRQFGFVKARYKGLLKNDNQLAMLFTLANLFRADQMIRQWERSH</sequence>
<evidence type="ECO:0000305" key="1"/>